<keyword id="KW-0028">Amino-acid biosynthesis</keyword>
<keyword id="KW-0100">Branched-chain amino acid biosynthesis</keyword>
<keyword id="KW-0460">Magnesium</keyword>
<keyword id="KW-0479">Metal-binding</keyword>
<keyword id="KW-0521">NADP</keyword>
<keyword id="KW-0560">Oxidoreductase</keyword>
<keyword id="KW-0677">Repeat</keyword>
<accession>A5UHH1</accession>
<protein>
    <recommendedName>
        <fullName evidence="1">Ketol-acid reductoisomerase (NADP(+))</fullName>
        <shortName evidence="1">KARI</shortName>
        <ecNumber evidence="1">1.1.1.86</ecNumber>
    </recommendedName>
    <alternativeName>
        <fullName evidence="1">Acetohydroxy-acid isomeroreductase</fullName>
        <shortName evidence="1">AHIR</shortName>
    </alternativeName>
    <alternativeName>
        <fullName evidence="1">Alpha-keto-beta-hydroxylacyl reductoisomerase</fullName>
    </alternativeName>
    <alternativeName>
        <fullName evidence="1">Ketol-acid reductoisomerase type 2</fullName>
    </alternativeName>
    <alternativeName>
        <fullName evidence="1">Ketol-acid reductoisomerase type II</fullName>
    </alternativeName>
</protein>
<feature type="chain" id="PRO_1000050513" description="Ketol-acid reductoisomerase (NADP(+))">
    <location>
        <begin position="1"/>
        <end position="492"/>
    </location>
</feature>
<feature type="domain" description="KARI N-terminal Rossmann" evidence="2">
    <location>
        <begin position="14"/>
        <end position="208"/>
    </location>
</feature>
<feature type="domain" description="KARI C-terminal knotted 1" evidence="3">
    <location>
        <begin position="209"/>
        <end position="344"/>
    </location>
</feature>
<feature type="domain" description="KARI C-terminal knotted 2" evidence="3">
    <location>
        <begin position="345"/>
        <end position="485"/>
    </location>
</feature>
<feature type="active site" evidence="1">
    <location>
        <position position="132"/>
    </location>
</feature>
<feature type="binding site" evidence="1">
    <location>
        <begin position="45"/>
        <end position="48"/>
    </location>
    <ligand>
        <name>NADP(+)</name>
        <dbReference type="ChEBI" id="CHEBI:58349"/>
    </ligand>
</feature>
<feature type="binding site" evidence="1">
    <location>
        <position position="68"/>
    </location>
    <ligand>
        <name>NADP(+)</name>
        <dbReference type="ChEBI" id="CHEBI:58349"/>
    </ligand>
</feature>
<feature type="binding site" evidence="1">
    <location>
        <position position="76"/>
    </location>
    <ligand>
        <name>NADP(+)</name>
        <dbReference type="ChEBI" id="CHEBI:58349"/>
    </ligand>
</feature>
<feature type="binding site" evidence="1">
    <location>
        <position position="78"/>
    </location>
    <ligand>
        <name>NADP(+)</name>
        <dbReference type="ChEBI" id="CHEBI:58349"/>
    </ligand>
</feature>
<feature type="binding site" evidence="1">
    <location>
        <begin position="108"/>
        <end position="110"/>
    </location>
    <ligand>
        <name>NADP(+)</name>
        <dbReference type="ChEBI" id="CHEBI:58349"/>
    </ligand>
</feature>
<feature type="binding site" evidence="1">
    <location>
        <position position="158"/>
    </location>
    <ligand>
        <name>NADP(+)</name>
        <dbReference type="ChEBI" id="CHEBI:58349"/>
    </ligand>
</feature>
<feature type="binding site" evidence="1">
    <location>
        <position position="217"/>
    </location>
    <ligand>
        <name>Mg(2+)</name>
        <dbReference type="ChEBI" id="CHEBI:18420"/>
        <label>1</label>
    </ligand>
</feature>
<feature type="binding site" evidence="1">
    <location>
        <position position="217"/>
    </location>
    <ligand>
        <name>Mg(2+)</name>
        <dbReference type="ChEBI" id="CHEBI:18420"/>
        <label>2</label>
    </ligand>
</feature>
<feature type="binding site" evidence="1">
    <location>
        <position position="221"/>
    </location>
    <ligand>
        <name>Mg(2+)</name>
        <dbReference type="ChEBI" id="CHEBI:18420"/>
        <label>1</label>
    </ligand>
</feature>
<feature type="binding site" evidence="1">
    <location>
        <position position="389"/>
    </location>
    <ligand>
        <name>Mg(2+)</name>
        <dbReference type="ChEBI" id="CHEBI:18420"/>
        <label>2</label>
    </ligand>
</feature>
<feature type="binding site" evidence="1">
    <location>
        <position position="393"/>
    </location>
    <ligand>
        <name>Mg(2+)</name>
        <dbReference type="ChEBI" id="CHEBI:18420"/>
        <label>2</label>
    </ligand>
</feature>
<feature type="binding site" evidence="1">
    <location>
        <position position="414"/>
    </location>
    <ligand>
        <name>substrate</name>
    </ligand>
</feature>
<sequence length="492" mass="54278">MANYFNTLNLRQKLDQLGRCRFMDREEFADEANFLKGKKIVIVGCGAQGLNQGLNMRDSGLDISYALRPEAIAEKRASFQRATENGFKVGTYEELIPTADLVVNLTPDKQHSKVVADVMPLMKKDSAFGYSHGFNIVEVGEEIRKDITVVMVAPKCPGTEVREEYKRGFGVPTLIAVHPENDPKGEGLAIAKAWAAATGGHKAGVLESSFVAEVKSDLMGEQTILCGMLQAGSIVCYDKLVADGKDPAYAGKLIQYGWETITEALKQGGITLMMDRLSNSAKLRAFELAEQIKKSLGFLYYKHMDDIVSGHFSATMMADWENDDKDLFAWREATGKTAFENAPKYDGKISEQEYFDNGVLMIAMVKAGVELAFDAMVASGIYEESAYYESLHELPLIANTIARKRLYEMNVVISDTAEYGNYLFSNVATPILAKEIIPNLQKGDLGEPTPAVEVDNITLRAVNDAIRNHPVELIGQELRGYMTDMKRIAVAG</sequence>
<gene>
    <name evidence="1" type="primary">ilvC</name>
    <name type="ordered locus">CGSHiGG_06705</name>
</gene>
<organism>
    <name type="scientific">Haemophilus influenzae (strain PittGG)</name>
    <dbReference type="NCBI Taxonomy" id="374931"/>
    <lineage>
        <taxon>Bacteria</taxon>
        <taxon>Pseudomonadati</taxon>
        <taxon>Pseudomonadota</taxon>
        <taxon>Gammaproteobacteria</taxon>
        <taxon>Pasteurellales</taxon>
        <taxon>Pasteurellaceae</taxon>
        <taxon>Haemophilus</taxon>
    </lineage>
</organism>
<dbReference type="EC" id="1.1.1.86" evidence="1"/>
<dbReference type="EMBL" id="CP000672">
    <property type="protein sequence ID" value="ABR00227.1"/>
    <property type="molecule type" value="Genomic_DNA"/>
</dbReference>
<dbReference type="SMR" id="A5UHH1"/>
<dbReference type="KEGG" id="hiq:CGSHiGG_06705"/>
<dbReference type="HOGENOM" id="CLU_551905_0_0_6"/>
<dbReference type="UniPathway" id="UPA00047">
    <property type="reaction ID" value="UER00056"/>
</dbReference>
<dbReference type="UniPathway" id="UPA00049">
    <property type="reaction ID" value="UER00060"/>
</dbReference>
<dbReference type="Proteomes" id="UP000001990">
    <property type="component" value="Chromosome"/>
</dbReference>
<dbReference type="GO" id="GO:0005829">
    <property type="term" value="C:cytosol"/>
    <property type="evidence" value="ECO:0007669"/>
    <property type="project" value="TreeGrafter"/>
</dbReference>
<dbReference type="GO" id="GO:0004455">
    <property type="term" value="F:ketol-acid reductoisomerase activity"/>
    <property type="evidence" value="ECO:0007669"/>
    <property type="project" value="UniProtKB-UniRule"/>
</dbReference>
<dbReference type="GO" id="GO:0000287">
    <property type="term" value="F:magnesium ion binding"/>
    <property type="evidence" value="ECO:0007669"/>
    <property type="project" value="UniProtKB-UniRule"/>
</dbReference>
<dbReference type="GO" id="GO:0009097">
    <property type="term" value="P:isoleucine biosynthetic process"/>
    <property type="evidence" value="ECO:0007669"/>
    <property type="project" value="UniProtKB-UniRule"/>
</dbReference>
<dbReference type="GO" id="GO:0009099">
    <property type="term" value="P:L-valine biosynthetic process"/>
    <property type="evidence" value="ECO:0007669"/>
    <property type="project" value="UniProtKB-UniRule"/>
</dbReference>
<dbReference type="FunFam" id="1.10.1040.10:FF:000007">
    <property type="entry name" value="Ketol-acid reductoisomerase (NADP(+))"/>
    <property type="match status" value="1"/>
</dbReference>
<dbReference type="FunFam" id="3.40.50.720:FF:000043">
    <property type="entry name" value="Ketol-acid reductoisomerase (NADP(+))"/>
    <property type="match status" value="1"/>
</dbReference>
<dbReference type="Gene3D" id="1.10.1040.10">
    <property type="entry name" value="N-(1-d-carboxylethyl)-l-norvaline Dehydrogenase, domain 2"/>
    <property type="match status" value="1"/>
</dbReference>
<dbReference type="Gene3D" id="3.40.50.720">
    <property type="entry name" value="NAD(P)-binding Rossmann-like Domain"/>
    <property type="match status" value="1"/>
</dbReference>
<dbReference type="HAMAP" id="MF_00435">
    <property type="entry name" value="IlvC"/>
    <property type="match status" value="1"/>
</dbReference>
<dbReference type="InterPro" id="IPR008927">
    <property type="entry name" value="6-PGluconate_DH-like_C_sf"/>
</dbReference>
<dbReference type="InterPro" id="IPR013328">
    <property type="entry name" value="6PGD_dom2"/>
</dbReference>
<dbReference type="InterPro" id="IPR013023">
    <property type="entry name" value="KARI"/>
</dbReference>
<dbReference type="InterPro" id="IPR000506">
    <property type="entry name" value="KARI_C"/>
</dbReference>
<dbReference type="InterPro" id="IPR013116">
    <property type="entry name" value="KARI_N"/>
</dbReference>
<dbReference type="InterPro" id="IPR036291">
    <property type="entry name" value="NAD(P)-bd_dom_sf"/>
</dbReference>
<dbReference type="NCBIfam" id="TIGR00465">
    <property type="entry name" value="ilvC"/>
    <property type="match status" value="1"/>
</dbReference>
<dbReference type="NCBIfam" id="NF003557">
    <property type="entry name" value="PRK05225.1"/>
    <property type="match status" value="1"/>
</dbReference>
<dbReference type="PANTHER" id="PTHR21371">
    <property type="entry name" value="KETOL-ACID REDUCTOISOMERASE, MITOCHONDRIAL"/>
    <property type="match status" value="1"/>
</dbReference>
<dbReference type="PANTHER" id="PTHR21371:SF1">
    <property type="entry name" value="KETOL-ACID REDUCTOISOMERASE, MITOCHONDRIAL"/>
    <property type="match status" value="1"/>
</dbReference>
<dbReference type="Pfam" id="PF01450">
    <property type="entry name" value="KARI_C"/>
    <property type="match status" value="2"/>
</dbReference>
<dbReference type="Pfam" id="PF07991">
    <property type="entry name" value="KARI_N"/>
    <property type="match status" value="1"/>
</dbReference>
<dbReference type="SUPFAM" id="SSF48179">
    <property type="entry name" value="6-phosphogluconate dehydrogenase C-terminal domain-like"/>
    <property type="match status" value="2"/>
</dbReference>
<dbReference type="SUPFAM" id="SSF51735">
    <property type="entry name" value="NAD(P)-binding Rossmann-fold domains"/>
    <property type="match status" value="1"/>
</dbReference>
<dbReference type="PROSITE" id="PS51851">
    <property type="entry name" value="KARI_C"/>
    <property type="match status" value="2"/>
</dbReference>
<dbReference type="PROSITE" id="PS51850">
    <property type="entry name" value="KARI_N"/>
    <property type="match status" value="1"/>
</dbReference>
<reference key="1">
    <citation type="journal article" date="2007" name="Genome Biol.">
        <title>Characterization and modeling of the Haemophilus influenzae core and supragenomes based on the complete genomic sequences of Rd and 12 clinical nontypeable strains.</title>
        <authorList>
            <person name="Hogg J.S."/>
            <person name="Hu F.Z."/>
            <person name="Janto B."/>
            <person name="Boissy R."/>
            <person name="Hayes J."/>
            <person name="Keefe R."/>
            <person name="Post J.C."/>
            <person name="Ehrlich G.D."/>
        </authorList>
    </citation>
    <scope>NUCLEOTIDE SEQUENCE [LARGE SCALE GENOMIC DNA]</scope>
    <source>
        <strain>PittGG</strain>
    </source>
</reference>
<proteinExistence type="inferred from homology"/>
<evidence type="ECO:0000255" key="1">
    <source>
        <dbReference type="HAMAP-Rule" id="MF_00435"/>
    </source>
</evidence>
<evidence type="ECO:0000255" key="2">
    <source>
        <dbReference type="PROSITE-ProRule" id="PRU01197"/>
    </source>
</evidence>
<evidence type="ECO:0000255" key="3">
    <source>
        <dbReference type="PROSITE-ProRule" id="PRU01198"/>
    </source>
</evidence>
<comment type="function">
    <text evidence="1">Involved in the biosynthesis of branched-chain amino acids (BCAA). Catalyzes an alkyl-migration followed by a ketol-acid reduction of (S)-2-acetolactate (S2AL) to yield (R)-2,3-dihydroxy-isovalerate. In the isomerase reaction, S2AL is rearranged via a Mg-dependent methyl migration to produce 3-hydroxy-3-methyl-2-ketobutyrate (HMKB). In the reductase reaction, this 2-ketoacid undergoes a metal-dependent reduction by NADPH to yield (R)-2,3-dihydroxy-isovalerate.</text>
</comment>
<comment type="catalytic activity">
    <reaction evidence="1">
        <text>(2R)-2,3-dihydroxy-3-methylbutanoate + NADP(+) = (2S)-2-acetolactate + NADPH + H(+)</text>
        <dbReference type="Rhea" id="RHEA:22068"/>
        <dbReference type="ChEBI" id="CHEBI:15378"/>
        <dbReference type="ChEBI" id="CHEBI:49072"/>
        <dbReference type="ChEBI" id="CHEBI:57783"/>
        <dbReference type="ChEBI" id="CHEBI:58349"/>
        <dbReference type="ChEBI" id="CHEBI:58476"/>
        <dbReference type="EC" id="1.1.1.86"/>
    </reaction>
</comment>
<comment type="catalytic activity">
    <reaction evidence="1">
        <text>(2R,3R)-2,3-dihydroxy-3-methylpentanoate + NADP(+) = (S)-2-ethyl-2-hydroxy-3-oxobutanoate + NADPH + H(+)</text>
        <dbReference type="Rhea" id="RHEA:13493"/>
        <dbReference type="ChEBI" id="CHEBI:15378"/>
        <dbReference type="ChEBI" id="CHEBI:49256"/>
        <dbReference type="ChEBI" id="CHEBI:49258"/>
        <dbReference type="ChEBI" id="CHEBI:57783"/>
        <dbReference type="ChEBI" id="CHEBI:58349"/>
        <dbReference type="EC" id="1.1.1.86"/>
    </reaction>
</comment>
<comment type="cofactor">
    <cofactor evidence="1">
        <name>Mg(2+)</name>
        <dbReference type="ChEBI" id="CHEBI:18420"/>
    </cofactor>
    <text evidence="1">Binds 2 magnesium ions per subunit.</text>
</comment>
<comment type="pathway">
    <text evidence="1">Amino-acid biosynthesis; L-isoleucine biosynthesis; L-isoleucine from 2-oxobutanoate: step 2/4.</text>
</comment>
<comment type="pathway">
    <text evidence="1">Amino-acid biosynthesis; L-valine biosynthesis; L-valine from pyruvate: step 2/4.</text>
</comment>
<comment type="similarity">
    <text evidence="1">Belongs to the ketol-acid reductoisomerase family.</text>
</comment>
<name>ILVC_HAEIG</name>